<keyword id="KW-1185">Reference proteome</keyword>
<keyword id="KW-0732">Signal</keyword>
<organism>
    <name type="scientific">Mycobacterium tuberculosis (strain ATCC 25618 / H37Rv)</name>
    <dbReference type="NCBI Taxonomy" id="83332"/>
    <lineage>
        <taxon>Bacteria</taxon>
        <taxon>Bacillati</taxon>
        <taxon>Actinomycetota</taxon>
        <taxon>Actinomycetes</taxon>
        <taxon>Mycobacteriales</taxon>
        <taxon>Mycobacteriaceae</taxon>
        <taxon>Mycobacterium</taxon>
        <taxon>Mycobacterium tuberculosis complex</taxon>
    </lineage>
</organism>
<evidence type="ECO:0000255" key="1"/>
<proteinExistence type="inferred from homology"/>
<feature type="signal peptide" evidence="1">
    <location>
        <begin position="1"/>
        <end position="27"/>
    </location>
</feature>
<feature type="chain" id="PRO_0000014118" description="Uncharacterized protein Rv2011c">
    <location>
        <begin position="28"/>
        <end position="143"/>
    </location>
</feature>
<dbReference type="EMBL" id="AL123456">
    <property type="protein sequence ID" value="CCP44783.1"/>
    <property type="molecule type" value="Genomic_DNA"/>
</dbReference>
<dbReference type="PIR" id="A70760">
    <property type="entry name" value="A70760"/>
</dbReference>
<dbReference type="RefSeq" id="NP_216527.1">
    <property type="nucleotide sequence ID" value="NC_000962.3"/>
</dbReference>
<dbReference type="RefSeq" id="WP_003410078.1">
    <property type="nucleotide sequence ID" value="NZ_NVQJ01000043.1"/>
</dbReference>
<dbReference type="SMR" id="P9WLM5"/>
<dbReference type="STRING" id="83332.Rv2011c"/>
<dbReference type="PaxDb" id="83332-Rv2011c"/>
<dbReference type="DNASU" id="888922"/>
<dbReference type="GeneID" id="888922"/>
<dbReference type="KEGG" id="mtu:Rv2011c"/>
<dbReference type="KEGG" id="mtv:RVBD_2011c"/>
<dbReference type="TubercuList" id="Rv2011c"/>
<dbReference type="eggNOG" id="COG1846">
    <property type="taxonomic scope" value="Bacteria"/>
</dbReference>
<dbReference type="InParanoid" id="P9WLM5"/>
<dbReference type="OrthoDB" id="5511415at2"/>
<dbReference type="PhylomeDB" id="P9WLM5"/>
<dbReference type="Proteomes" id="UP000001584">
    <property type="component" value="Chromosome"/>
</dbReference>
<dbReference type="GO" id="GO:0003700">
    <property type="term" value="F:DNA-binding transcription factor activity"/>
    <property type="evidence" value="ECO:0007669"/>
    <property type="project" value="InterPro"/>
</dbReference>
<dbReference type="GO" id="GO:0006355">
    <property type="term" value="P:regulation of DNA-templated transcription"/>
    <property type="evidence" value="ECO:0000318"/>
    <property type="project" value="GO_Central"/>
</dbReference>
<dbReference type="GO" id="GO:0006950">
    <property type="term" value="P:response to stress"/>
    <property type="evidence" value="ECO:0000318"/>
    <property type="project" value="GO_Central"/>
</dbReference>
<dbReference type="Gene3D" id="1.10.10.10">
    <property type="entry name" value="Winged helix-like DNA-binding domain superfamily/Winged helix DNA-binding domain"/>
    <property type="match status" value="1"/>
</dbReference>
<dbReference type="InterPro" id="IPR000835">
    <property type="entry name" value="HTH_MarR-typ"/>
</dbReference>
<dbReference type="InterPro" id="IPR039422">
    <property type="entry name" value="MarR/SlyA-like"/>
</dbReference>
<dbReference type="InterPro" id="IPR036388">
    <property type="entry name" value="WH-like_DNA-bd_sf"/>
</dbReference>
<dbReference type="InterPro" id="IPR036390">
    <property type="entry name" value="WH_DNA-bd_sf"/>
</dbReference>
<dbReference type="PANTHER" id="PTHR33164:SF43">
    <property type="entry name" value="HTH-TYPE TRANSCRIPTIONAL REPRESSOR YETL"/>
    <property type="match status" value="1"/>
</dbReference>
<dbReference type="PANTHER" id="PTHR33164">
    <property type="entry name" value="TRANSCRIPTIONAL REGULATOR, MARR FAMILY"/>
    <property type="match status" value="1"/>
</dbReference>
<dbReference type="Pfam" id="PF12802">
    <property type="entry name" value="MarR_2"/>
    <property type="match status" value="1"/>
</dbReference>
<dbReference type="SUPFAM" id="SSF46785">
    <property type="entry name" value="Winged helix' DNA-binding domain"/>
    <property type="match status" value="1"/>
</dbReference>
<accession>P9WLM5</accession>
<accession>L0T8I6</accession>
<accession>P64927</accession>
<accession>Q10846</accession>
<reference key="1">
    <citation type="journal article" date="1998" name="Nature">
        <title>Deciphering the biology of Mycobacterium tuberculosis from the complete genome sequence.</title>
        <authorList>
            <person name="Cole S.T."/>
            <person name="Brosch R."/>
            <person name="Parkhill J."/>
            <person name="Garnier T."/>
            <person name="Churcher C.M."/>
            <person name="Harris D.E."/>
            <person name="Gordon S.V."/>
            <person name="Eiglmeier K."/>
            <person name="Gas S."/>
            <person name="Barry C.E. III"/>
            <person name="Tekaia F."/>
            <person name="Badcock K."/>
            <person name="Basham D."/>
            <person name="Brown D."/>
            <person name="Chillingworth T."/>
            <person name="Connor R."/>
            <person name="Davies R.M."/>
            <person name="Devlin K."/>
            <person name="Feltwell T."/>
            <person name="Gentles S."/>
            <person name="Hamlin N."/>
            <person name="Holroyd S."/>
            <person name="Hornsby T."/>
            <person name="Jagels K."/>
            <person name="Krogh A."/>
            <person name="McLean J."/>
            <person name="Moule S."/>
            <person name="Murphy L.D."/>
            <person name="Oliver S."/>
            <person name="Osborne J."/>
            <person name="Quail M.A."/>
            <person name="Rajandream M.A."/>
            <person name="Rogers J."/>
            <person name="Rutter S."/>
            <person name="Seeger K."/>
            <person name="Skelton S."/>
            <person name="Squares S."/>
            <person name="Squares R."/>
            <person name="Sulston J.E."/>
            <person name="Taylor K."/>
            <person name="Whitehead S."/>
            <person name="Barrell B.G."/>
        </authorList>
    </citation>
    <scope>NUCLEOTIDE SEQUENCE [LARGE SCALE GENOMIC DNA]</scope>
    <source>
        <strain>ATCC 25618 / H37Rv</strain>
    </source>
</reference>
<protein>
    <recommendedName>
        <fullName>Uncharacterized protein Rv2011c</fullName>
    </recommendedName>
</protein>
<sequence>MSDEIARLVADVFELAGLLRRSGEVVAAREGHTQARWQLLSVVSDRALTVPQAARRLGVTRQGVQRVANDLVVCGLAELRHNPDHRTSPLLVLTENGRRVLQAITERAIVVNNRLADAVDPAALQATRDSLRRMIVALKAERP</sequence>
<name>Y2011_MYCTU</name>
<gene>
    <name type="ordered locus">Rv2011c</name>
    <name type="ORF">MTCY39.06</name>
</gene>